<protein>
    <recommendedName>
        <fullName evidence="2">Large ribosomal subunit protein uL2cz/uL2cy</fullName>
    </recommendedName>
    <alternativeName>
        <fullName evidence="4">50S ribosomal protein L2, chloroplastic</fullName>
    </alternativeName>
</protein>
<name>RK2_ORYSA</name>
<feature type="chain" id="PRO_0000129690" description="Large ribosomal subunit protein uL2cz/uL2cy">
    <location>
        <begin position="1"/>
        <end position="273"/>
    </location>
</feature>
<feature type="region of interest" description="Disordered" evidence="3">
    <location>
        <begin position="1"/>
        <end position="20"/>
    </location>
</feature>
<feature type="region of interest" description="Disordered" evidence="3">
    <location>
        <begin position="225"/>
        <end position="273"/>
    </location>
</feature>
<proteinExistence type="inferred from homology"/>
<evidence type="ECO:0000250" key="1"/>
<evidence type="ECO:0000255" key="2">
    <source>
        <dbReference type="HAMAP-Rule" id="MF_01320"/>
    </source>
</evidence>
<evidence type="ECO:0000256" key="3">
    <source>
        <dbReference type="SAM" id="MobiDB-lite"/>
    </source>
</evidence>
<evidence type="ECO:0000305" key="4"/>
<comment type="subunit">
    <text evidence="1">Part of the 50S ribosomal subunit.</text>
</comment>
<comment type="subcellular location">
    <subcellularLocation>
        <location>Plastid</location>
        <location>Chloroplast</location>
    </subcellularLocation>
</comment>
<comment type="RNA editing">
    <location>
        <position position="1" evidence="1"/>
    </location>
    <text evidence="1">The initiator methionine is created by RNA editing.</text>
</comment>
<comment type="similarity">
    <text evidence="4">Belongs to the universal ribosomal protein uL2 family.</text>
</comment>
<comment type="sequence caution" evidence="4">
    <conflict type="erroneous gene model prediction">
        <sequence resource="EMBL-CDS" id="AAS46212"/>
    </conflict>
</comment>
<organism>
    <name type="scientific">Oryza sativa</name>
    <name type="common">Rice</name>
    <dbReference type="NCBI Taxonomy" id="4530"/>
    <lineage>
        <taxon>Eukaryota</taxon>
        <taxon>Viridiplantae</taxon>
        <taxon>Streptophyta</taxon>
        <taxon>Embryophyta</taxon>
        <taxon>Tracheophyta</taxon>
        <taxon>Spermatophyta</taxon>
        <taxon>Magnoliopsida</taxon>
        <taxon>Liliopsida</taxon>
        <taxon>Poales</taxon>
        <taxon>Poaceae</taxon>
        <taxon>BOP clade</taxon>
        <taxon>Oryzoideae</taxon>
        <taxon>Oryzeae</taxon>
        <taxon>Oryzinae</taxon>
        <taxon>Oryza</taxon>
    </lineage>
</organism>
<dbReference type="EMBL" id="AY522331">
    <property type="protein sequence ID" value="AAS46212.1"/>
    <property type="status" value="ALT_SEQ"/>
    <property type="molecule type" value="Genomic_DNA"/>
</dbReference>
<dbReference type="SMR" id="P0C495"/>
<dbReference type="ExpressionAtlas" id="P0C495">
    <property type="expression patterns" value="baseline"/>
</dbReference>
<dbReference type="GO" id="GO:0009507">
    <property type="term" value="C:chloroplast"/>
    <property type="evidence" value="ECO:0007669"/>
    <property type="project" value="UniProtKB-SubCell"/>
</dbReference>
<dbReference type="GO" id="GO:0005762">
    <property type="term" value="C:mitochondrial large ribosomal subunit"/>
    <property type="evidence" value="ECO:0007669"/>
    <property type="project" value="TreeGrafter"/>
</dbReference>
<dbReference type="GO" id="GO:0009536">
    <property type="term" value="C:plastid"/>
    <property type="evidence" value="ECO:0000305"/>
    <property type="project" value="Gramene"/>
</dbReference>
<dbReference type="GO" id="GO:0019843">
    <property type="term" value="F:rRNA binding"/>
    <property type="evidence" value="ECO:0007669"/>
    <property type="project" value="UniProtKB-UniRule"/>
</dbReference>
<dbReference type="GO" id="GO:0003735">
    <property type="term" value="F:structural constituent of ribosome"/>
    <property type="evidence" value="ECO:0007669"/>
    <property type="project" value="InterPro"/>
</dbReference>
<dbReference type="GO" id="GO:0016740">
    <property type="term" value="F:transferase activity"/>
    <property type="evidence" value="ECO:0007669"/>
    <property type="project" value="InterPro"/>
</dbReference>
<dbReference type="GO" id="GO:0032543">
    <property type="term" value="P:mitochondrial translation"/>
    <property type="evidence" value="ECO:0007669"/>
    <property type="project" value="TreeGrafter"/>
</dbReference>
<dbReference type="FunFam" id="4.10.950.10:FF:000001">
    <property type="entry name" value="50S ribosomal protein L2"/>
    <property type="match status" value="1"/>
</dbReference>
<dbReference type="FunFam" id="2.30.30.30:FF:000008">
    <property type="entry name" value="50S ribosomal protein L2, chloroplastic"/>
    <property type="match status" value="1"/>
</dbReference>
<dbReference type="FunFam" id="2.40.50.140:FF:000029">
    <property type="entry name" value="50S ribosomal protein L2, chloroplastic"/>
    <property type="match status" value="1"/>
</dbReference>
<dbReference type="Gene3D" id="2.30.30.30">
    <property type="match status" value="1"/>
</dbReference>
<dbReference type="Gene3D" id="2.40.50.140">
    <property type="entry name" value="Nucleic acid-binding proteins"/>
    <property type="match status" value="1"/>
</dbReference>
<dbReference type="Gene3D" id="4.10.950.10">
    <property type="entry name" value="Ribosomal protein L2, domain 3"/>
    <property type="match status" value="1"/>
</dbReference>
<dbReference type="HAMAP" id="MF_01320_B">
    <property type="entry name" value="Ribosomal_uL2_B"/>
    <property type="match status" value="1"/>
</dbReference>
<dbReference type="InterPro" id="IPR012340">
    <property type="entry name" value="NA-bd_OB-fold"/>
</dbReference>
<dbReference type="InterPro" id="IPR014722">
    <property type="entry name" value="Rib_uL2_dom2"/>
</dbReference>
<dbReference type="InterPro" id="IPR002171">
    <property type="entry name" value="Ribosomal_uL2"/>
</dbReference>
<dbReference type="InterPro" id="IPR005880">
    <property type="entry name" value="Ribosomal_uL2_bac/org-type"/>
</dbReference>
<dbReference type="InterPro" id="IPR022669">
    <property type="entry name" value="Ribosomal_uL2_C"/>
</dbReference>
<dbReference type="InterPro" id="IPR022671">
    <property type="entry name" value="Ribosomal_uL2_CS"/>
</dbReference>
<dbReference type="InterPro" id="IPR014726">
    <property type="entry name" value="Ribosomal_uL2_dom3"/>
</dbReference>
<dbReference type="InterPro" id="IPR022666">
    <property type="entry name" value="Ribosomal_uL2_RNA-bd_dom"/>
</dbReference>
<dbReference type="InterPro" id="IPR008991">
    <property type="entry name" value="Translation_prot_SH3-like_sf"/>
</dbReference>
<dbReference type="NCBIfam" id="TIGR01171">
    <property type="entry name" value="rplB_bact"/>
    <property type="match status" value="1"/>
</dbReference>
<dbReference type="PANTHER" id="PTHR13691:SF57">
    <property type="entry name" value="LARGE RIBOSOMAL SUBUNIT PROTEIN UL2CZ_UL2CY"/>
    <property type="match status" value="1"/>
</dbReference>
<dbReference type="PANTHER" id="PTHR13691">
    <property type="entry name" value="RIBOSOMAL PROTEIN L2"/>
    <property type="match status" value="1"/>
</dbReference>
<dbReference type="Pfam" id="PF00181">
    <property type="entry name" value="Ribosomal_L2"/>
    <property type="match status" value="1"/>
</dbReference>
<dbReference type="Pfam" id="PF03947">
    <property type="entry name" value="Ribosomal_L2_C"/>
    <property type="match status" value="1"/>
</dbReference>
<dbReference type="PIRSF" id="PIRSF002158">
    <property type="entry name" value="Ribosomal_L2"/>
    <property type="match status" value="1"/>
</dbReference>
<dbReference type="SMART" id="SM01383">
    <property type="entry name" value="Ribosomal_L2"/>
    <property type="match status" value="1"/>
</dbReference>
<dbReference type="SMART" id="SM01382">
    <property type="entry name" value="Ribosomal_L2_C"/>
    <property type="match status" value="1"/>
</dbReference>
<dbReference type="SUPFAM" id="SSF50249">
    <property type="entry name" value="Nucleic acid-binding proteins"/>
    <property type="match status" value="1"/>
</dbReference>
<dbReference type="SUPFAM" id="SSF50104">
    <property type="entry name" value="Translation proteins SH3-like domain"/>
    <property type="match status" value="1"/>
</dbReference>
<dbReference type="PROSITE" id="PS00467">
    <property type="entry name" value="RIBOSOMAL_L2"/>
    <property type="match status" value="1"/>
</dbReference>
<accession>P0C495</accession>
<accession>P17351</accession>
<accession>P92327</accession>
<accession>Q6QXY2</accession>
<accession>Q6QY28</accession>
<accession>Q8HR51</accession>
<keyword id="KW-0150">Chloroplast</keyword>
<keyword id="KW-0934">Plastid</keyword>
<keyword id="KW-0687">Ribonucleoprotein</keyword>
<keyword id="KW-0689">Ribosomal protein</keyword>
<keyword id="KW-0691">RNA editing</keyword>
<reference key="1">
    <citation type="journal article" date="2004" name="Plant Physiol.">
        <title>A comparison of rice chloroplast genomes.</title>
        <authorList>
            <person name="Tang J."/>
            <person name="Xia H."/>
            <person name="Cao M."/>
            <person name="Zhang X."/>
            <person name="Zeng W."/>
            <person name="Hu S."/>
            <person name="Tong W."/>
            <person name="Wang J."/>
            <person name="Wang J."/>
            <person name="Yu J."/>
            <person name="Yang H."/>
            <person name="Zhu L."/>
        </authorList>
    </citation>
    <scope>NUCLEOTIDE SEQUENCE [LARGE SCALE GENOMIC DNA]</scope>
    <source>
        <strain>cv. PA64s</strain>
    </source>
</reference>
<gene>
    <name type="primary">rpl2-A</name>
    <name type="ORF">PA123</name>
</gene>
<gene>
    <name type="primary">rpl2-B</name>
</gene>
<geneLocation type="chloroplast"/>
<sequence>MAKHLYKTPIPSTRKGTIDRQVKSNPRNNLIHGRHRCGKGRNSRGIITARHRGGGHKRLYRKIDFRRNQKDISGRIVTIEYDPNRNAYICLIHYGDGEKGYILHPRGAIIGDTIVSGTKVPISMGNALPLTDMPLGTAIHNIEITRGRGGQLARAAGAVAKLIAKEGKSATLRLPSGEVRLVSQNCLATVGQVGNVGVNQKSLGRAGSKCWLGKRPVVRGVVMNPVDHPHGGGEGKAPIGRKKPTTPWGYPALGRRTRKRKKYSDSFILRRRK</sequence>